<protein>
    <recommendedName>
        <fullName>Integrin beta-2-like protein</fullName>
    </recommendedName>
    <alternativeName>
        <fullName>Protein pactolus</fullName>
    </alternativeName>
</protein>
<proteinExistence type="evidence at protein level"/>
<comment type="function">
    <text evidence="8">During inflammatory stimulation, plays a role in retaining Cxcl13-expressing cells at the site of the inflammatory response.</text>
</comment>
<comment type="subunit">
    <text evidence="6 9 13">Monomer and homodimer (Probable). Unlike integrin beta chains, no alpha chain partner has yet been found.</text>
</comment>
<comment type="subcellular location">
    <subcellularLocation>
        <location evidence="6 7 10">Cell membrane</location>
        <topology evidence="6 7 10">Single-pass type I membrane protein</topology>
    </subcellularLocation>
    <text evidence="6 7 10">In unactivated neutrophils, the majority of the protein is contained in intracellular granules and is released to the cell surface following inflammatory activation or induction of necrotic or apoptotic cell death.</text>
</comment>
<comment type="alternative products">
    <event type="alternative splicing"/>
    <isoform>
        <id>Q3UV74-1</id>
        <name evidence="10">1</name>
        <name evidence="5">A</name>
        <name evidence="10">Membrane-bound</name>
        <sequence type="displayed"/>
    </isoform>
    <isoform>
        <id>Q3UV74-2</id>
        <name evidence="10">2</name>
        <name evidence="5">B</name>
        <name evidence="10">Truncated</name>
        <sequence type="described" ref="VSP_052321 VSP_052322"/>
    </isoform>
    <isoform>
        <id>Q3UV74-3</id>
        <name evidence="5">3</name>
        <name evidence="5">C</name>
        <sequence type="described" ref="VSP_052319 VSP_052320"/>
    </isoform>
</comment>
<comment type="tissue specificity">
    <text evidence="6">Expressed predominantly in maturing and mature neutrophils.</text>
</comment>
<comment type="PTM">
    <text evidence="6">N-glycosylated.</text>
</comment>
<comment type="polymorphism">
    <text evidence="6">Strain C57BL/6 preferentially expresses isoform 1 while strains BALB/c and C3H/HeJ preferentially express isoform 2. This is due to a single nucleotide difference at the second splice acceptor site in exon 13 which results in production of isoform 2 when this splice site is used in strains BALB/c and C3H/HeJ.</text>
</comment>
<comment type="disruption phenotype">
    <text evidence="7 8">Mice display normal neutrophil maturation and function including appropriate migration into sites of inflammation and response to bacterial infection. Following inflammatory stimulus in the peritoneal cavity, they display decreased levels of Cxcl13 due to the migration of resident Cxcl13-expressing macrophages from the peritoneal cavity during the inflammatory response.</text>
</comment>
<comment type="miscellaneous">
    <text>The human orthologous protein seems not to exist.</text>
</comment>
<comment type="similarity">
    <text evidence="2">Belongs to the integrin beta chain family.</text>
</comment>
<name>ITB2L_MOUSE</name>
<evidence type="ECO:0000250" key="1">
    <source>
        <dbReference type="UniProtKB" id="P05106"/>
    </source>
</evidence>
<evidence type="ECO:0000255" key="2"/>
<evidence type="ECO:0000255" key="3">
    <source>
        <dbReference type="PROSITE-ProRule" id="PRU01392"/>
    </source>
</evidence>
<evidence type="ECO:0000256" key="4">
    <source>
        <dbReference type="SAM" id="MobiDB-lite"/>
    </source>
</evidence>
<evidence type="ECO:0000269" key="5">
    <source>
    </source>
</evidence>
<evidence type="ECO:0000269" key="6">
    <source>
    </source>
</evidence>
<evidence type="ECO:0000269" key="7">
    <source>
    </source>
</evidence>
<evidence type="ECO:0000269" key="8">
    <source>
    </source>
</evidence>
<evidence type="ECO:0000269" key="9">
    <source>
    </source>
</evidence>
<evidence type="ECO:0000269" key="10">
    <source>
    </source>
</evidence>
<evidence type="ECO:0000303" key="11">
    <source>
    </source>
</evidence>
<evidence type="ECO:0000303" key="12">
    <source>
    </source>
</evidence>
<evidence type="ECO:0000305" key="13"/>
<evidence type="ECO:0000312" key="14">
    <source>
        <dbReference type="EMBL" id="AAC25502.1"/>
    </source>
</evidence>
<evidence type="ECO:0000312" key="15">
    <source>
        <dbReference type="EMBL" id="AAI13143.1"/>
    </source>
</evidence>
<evidence type="ECO:0000312" key="16">
    <source>
        <dbReference type="EMBL" id="BAE23399.1"/>
    </source>
</evidence>
<evidence type="ECO:0000312" key="17">
    <source>
        <dbReference type="MGI" id="MGI:1277979"/>
    </source>
</evidence>
<evidence type="ECO:0007829" key="18">
    <source>
        <dbReference type="PDB" id="2IUE"/>
    </source>
</evidence>
<keyword id="KW-0002">3D-structure</keyword>
<keyword id="KW-0025">Alternative splicing</keyword>
<keyword id="KW-1003">Cell membrane</keyword>
<keyword id="KW-1015">Disulfide bond</keyword>
<keyword id="KW-0245">EGF-like domain</keyword>
<keyword id="KW-0325">Glycoprotein</keyword>
<keyword id="KW-0395">Inflammatory response</keyword>
<keyword id="KW-0401">Integrin</keyword>
<keyword id="KW-0472">Membrane</keyword>
<keyword id="KW-1185">Reference proteome</keyword>
<keyword id="KW-0677">Repeat</keyword>
<keyword id="KW-0732">Signal</keyword>
<keyword id="KW-0812">Transmembrane</keyword>
<keyword id="KW-1133">Transmembrane helix</keyword>
<dbReference type="EMBL" id="AF051367">
    <property type="protein sequence ID" value="AAC25502.1"/>
    <property type="molecule type" value="mRNA"/>
</dbReference>
<dbReference type="EMBL" id="AK137534">
    <property type="protein sequence ID" value="BAE23399.1"/>
    <property type="molecule type" value="mRNA"/>
</dbReference>
<dbReference type="EMBL" id="BC113142">
    <property type="protein sequence ID" value="AAI13143.1"/>
    <property type="molecule type" value="mRNA"/>
</dbReference>
<dbReference type="CCDS" id="CCDS28358.1">
    <molecule id="Q3UV74-1"/>
</dbReference>
<dbReference type="RefSeq" id="NP_032431.2">
    <molecule id="Q3UV74-1"/>
    <property type="nucleotide sequence ID" value="NM_008405.3"/>
</dbReference>
<dbReference type="PDB" id="2IUE">
    <property type="method" value="NMR"/>
    <property type="chains" value="A=124-335"/>
</dbReference>
<dbReference type="PDBsum" id="2IUE"/>
<dbReference type="BMRB" id="Q3UV74"/>
<dbReference type="SMR" id="Q3UV74"/>
<dbReference type="FunCoup" id="Q3UV74">
    <property type="interactions" value="711"/>
</dbReference>
<dbReference type="STRING" id="10090.ENSMUSP00000000161"/>
<dbReference type="GlyCosmos" id="Q3UV74">
    <property type="glycosylation" value="12 sites, No reported glycans"/>
</dbReference>
<dbReference type="GlyGen" id="Q3UV74">
    <property type="glycosylation" value="12 sites"/>
</dbReference>
<dbReference type="iPTMnet" id="Q3UV74"/>
<dbReference type="PhosphoSitePlus" id="Q3UV74"/>
<dbReference type="PaxDb" id="10090-ENSMUSP00000000161"/>
<dbReference type="ProteomicsDB" id="269345">
    <molecule id="Q3UV74-1"/>
</dbReference>
<dbReference type="ProteomicsDB" id="269346">
    <molecule id="Q3UV74-2"/>
</dbReference>
<dbReference type="ProteomicsDB" id="269347">
    <molecule id="Q3UV74-3"/>
</dbReference>
<dbReference type="DNASU" id="16415"/>
<dbReference type="Ensembl" id="ENSMUST00000000161.14">
    <molecule id="Q3UV74-1"/>
    <property type="protein sequence ID" value="ENSMUSP00000000161.8"/>
    <property type="gene ID" value="ENSMUSG00000000157.17"/>
</dbReference>
<dbReference type="Ensembl" id="ENSMUST00000131567.8">
    <molecule id="Q3UV74-2"/>
    <property type="protein sequence ID" value="ENSMUSP00000114497.2"/>
    <property type="gene ID" value="ENSMUSG00000000157.17"/>
</dbReference>
<dbReference type="GeneID" id="16415"/>
<dbReference type="KEGG" id="mmu:16415"/>
<dbReference type="UCSC" id="uc008adb.1">
    <molecule id="Q3UV74-1"/>
    <property type="organism name" value="mouse"/>
</dbReference>
<dbReference type="AGR" id="MGI:1277979"/>
<dbReference type="CTD" id="16415"/>
<dbReference type="MGI" id="MGI:1277979">
    <property type="gene designation" value="Itgb2l"/>
</dbReference>
<dbReference type="VEuPathDB" id="HostDB:ENSMUSG00000000157"/>
<dbReference type="eggNOG" id="KOG1226">
    <property type="taxonomic scope" value="Eukaryota"/>
</dbReference>
<dbReference type="GeneTree" id="ENSGT01130000278313"/>
<dbReference type="HOGENOM" id="CLU_011772_4_0_1"/>
<dbReference type="InParanoid" id="Q3UV74"/>
<dbReference type="OMA" id="DIWIVIA"/>
<dbReference type="OrthoDB" id="410592at2759"/>
<dbReference type="PhylomeDB" id="Q3UV74"/>
<dbReference type="TreeFam" id="TF105392"/>
<dbReference type="BioGRID-ORCS" id="16415">
    <property type="hits" value="1 hit in 75 CRISPR screens"/>
</dbReference>
<dbReference type="ChiTaRS" id="Itgb2l">
    <property type="organism name" value="mouse"/>
</dbReference>
<dbReference type="EvolutionaryTrace" id="Q3UV74"/>
<dbReference type="PRO" id="PR:Q3UV74"/>
<dbReference type="Proteomes" id="UP000000589">
    <property type="component" value="Chromosome 16"/>
</dbReference>
<dbReference type="RNAct" id="Q3UV74">
    <property type="molecule type" value="protein"/>
</dbReference>
<dbReference type="Bgee" id="ENSMUSG00000000157">
    <property type="expression patterns" value="Expressed in granulocyte and 42 other cell types or tissues"/>
</dbReference>
<dbReference type="ExpressionAtlas" id="Q3UV74">
    <property type="expression patterns" value="baseline and differential"/>
</dbReference>
<dbReference type="GO" id="GO:0005886">
    <property type="term" value="C:plasma membrane"/>
    <property type="evidence" value="ECO:0007669"/>
    <property type="project" value="UniProtKB-SubCell"/>
</dbReference>
<dbReference type="GO" id="GO:0030141">
    <property type="term" value="C:secretory granule"/>
    <property type="evidence" value="ECO:0000314"/>
    <property type="project" value="MGI"/>
</dbReference>
<dbReference type="GO" id="GO:0006954">
    <property type="term" value="P:inflammatory response"/>
    <property type="evidence" value="ECO:0007669"/>
    <property type="project" value="UniProtKB-KW"/>
</dbReference>
<dbReference type="GO" id="GO:0007229">
    <property type="term" value="P:integrin-mediated signaling pathway"/>
    <property type="evidence" value="ECO:0007669"/>
    <property type="project" value="UniProtKB-KW"/>
</dbReference>
<dbReference type="FunFam" id="2.10.25.10:FF:000076">
    <property type="entry name" value="Integrin beta"/>
    <property type="match status" value="1"/>
</dbReference>
<dbReference type="FunFam" id="2.10.25.10:FF:000098">
    <property type="entry name" value="Integrin beta"/>
    <property type="match status" value="1"/>
</dbReference>
<dbReference type="FunFam" id="2.10.25.10:FF:000442">
    <property type="entry name" value="Integrin beta"/>
    <property type="match status" value="1"/>
</dbReference>
<dbReference type="FunFam" id="2.60.40.1510:FF:000008">
    <property type="entry name" value="Integrin beta"/>
    <property type="match status" value="1"/>
</dbReference>
<dbReference type="FunFam" id="3.30.1680.10:FF:000012">
    <property type="entry name" value="Integrin beta"/>
    <property type="match status" value="1"/>
</dbReference>
<dbReference type="Gene3D" id="6.20.50.10">
    <property type="match status" value="1"/>
</dbReference>
<dbReference type="Gene3D" id="2.10.25.10">
    <property type="entry name" value="Laminin"/>
    <property type="match status" value="4"/>
</dbReference>
<dbReference type="Gene3D" id="3.30.1680.10">
    <property type="entry name" value="ligand-binding face of the semaphorins, domain 2"/>
    <property type="match status" value="1"/>
</dbReference>
<dbReference type="Gene3D" id="2.60.40.1510">
    <property type="entry name" value="ntegrin, alpha v. Chain A, domain 3"/>
    <property type="match status" value="1"/>
</dbReference>
<dbReference type="Gene3D" id="3.40.50.410">
    <property type="entry name" value="von Willebrand factor, type A domain"/>
    <property type="match status" value="1"/>
</dbReference>
<dbReference type="InterPro" id="IPR013111">
    <property type="entry name" value="EGF_extracell"/>
</dbReference>
<dbReference type="InterPro" id="IPR015439">
    <property type="entry name" value="Integrin_b-2_sf"/>
</dbReference>
<dbReference type="InterPro" id="IPR033760">
    <property type="entry name" value="Integrin_beta_N"/>
</dbReference>
<dbReference type="InterPro" id="IPR015812">
    <property type="entry name" value="Integrin_bsu"/>
</dbReference>
<dbReference type="InterPro" id="IPR012896">
    <property type="entry name" value="Integrin_bsu_tail"/>
</dbReference>
<dbReference type="InterPro" id="IPR036349">
    <property type="entry name" value="Integrin_bsu_tail_dom_sf"/>
</dbReference>
<dbReference type="InterPro" id="IPR002369">
    <property type="entry name" value="Integrin_bsu_VWA"/>
</dbReference>
<dbReference type="InterPro" id="IPR032695">
    <property type="entry name" value="Integrin_dom_sf"/>
</dbReference>
<dbReference type="InterPro" id="IPR016201">
    <property type="entry name" value="PSI"/>
</dbReference>
<dbReference type="InterPro" id="IPR036465">
    <property type="entry name" value="vWFA_dom_sf"/>
</dbReference>
<dbReference type="PANTHER" id="PTHR10082">
    <property type="entry name" value="INTEGRIN BETA SUBUNIT"/>
    <property type="match status" value="1"/>
</dbReference>
<dbReference type="PANTHER" id="PTHR10082:SF15">
    <property type="entry name" value="INTEGRIN BETA-2"/>
    <property type="match status" value="1"/>
</dbReference>
<dbReference type="Pfam" id="PF07974">
    <property type="entry name" value="EGF_2"/>
    <property type="match status" value="1"/>
</dbReference>
<dbReference type="Pfam" id="PF23105">
    <property type="entry name" value="EGF_integrin"/>
    <property type="match status" value="1"/>
</dbReference>
<dbReference type="Pfam" id="PF00362">
    <property type="entry name" value="Integrin_beta"/>
    <property type="match status" value="2"/>
</dbReference>
<dbReference type="Pfam" id="PF17205">
    <property type="entry name" value="PSI_integrin"/>
    <property type="match status" value="1"/>
</dbReference>
<dbReference type="PIRSF" id="PIRSF002512">
    <property type="entry name" value="Integrin_B"/>
    <property type="match status" value="1"/>
</dbReference>
<dbReference type="PRINTS" id="PR01186">
    <property type="entry name" value="INTEGRINB"/>
</dbReference>
<dbReference type="SMART" id="SM00187">
    <property type="entry name" value="INB"/>
    <property type="match status" value="1"/>
</dbReference>
<dbReference type="SMART" id="SM01242">
    <property type="entry name" value="Integrin_B_tail"/>
    <property type="match status" value="1"/>
</dbReference>
<dbReference type="SMART" id="SM00423">
    <property type="entry name" value="PSI"/>
    <property type="match status" value="1"/>
</dbReference>
<dbReference type="SUPFAM" id="SSF57196">
    <property type="entry name" value="EGF/Laminin"/>
    <property type="match status" value="2"/>
</dbReference>
<dbReference type="SUPFAM" id="SSF69687">
    <property type="entry name" value="Integrin beta tail domain"/>
    <property type="match status" value="1"/>
</dbReference>
<dbReference type="SUPFAM" id="SSF69179">
    <property type="entry name" value="Integrin domains"/>
    <property type="match status" value="1"/>
</dbReference>
<dbReference type="SUPFAM" id="SSF103575">
    <property type="entry name" value="Plexin repeat"/>
    <property type="match status" value="1"/>
</dbReference>
<dbReference type="SUPFAM" id="SSF53300">
    <property type="entry name" value="vWA-like"/>
    <property type="match status" value="1"/>
</dbReference>
<dbReference type="PROSITE" id="PS00022">
    <property type="entry name" value="EGF_1"/>
    <property type="match status" value="2"/>
</dbReference>
<dbReference type="PROSITE" id="PS01186">
    <property type="entry name" value="EGF_2"/>
    <property type="match status" value="3"/>
</dbReference>
<dbReference type="PROSITE" id="PS00243">
    <property type="entry name" value="I_EGF_1"/>
    <property type="match status" value="3"/>
</dbReference>
<dbReference type="PROSITE" id="PS52047">
    <property type="entry name" value="I_EGF_2"/>
    <property type="match status" value="4"/>
</dbReference>
<organism>
    <name type="scientific">Mus musculus</name>
    <name type="common">Mouse</name>
    <dbReference type="NCBI Taxonomy" id="10090"/>
    <lineage>
        <taxon>Eukaryota</taxon>
        <taxon>Metazoa</taxon>
        <taxon>Chordata</taxon>
        <taxon>Craniata</taxon>
        <taxon>Vertebrata</taxon>
        <taxon>Euteleostomi</taxon>
        <taxon>Mammalia</taxon>
        <taxon>Eutheria</taxon>
        <taxon>Euarchontoglires</taxon>
        <taxon>Glires</taxon>
        <taxon>Rodentia</taxon>
        <taxon>Myomorpha</taxon>
        <taxon>Muroidea</taxon>
        <taxon>Muridae</taxon>
        <taxon>Murinae</taxon>
        <taxon>Mus</taxon>
        <taxon>Mus</taxon>
    </lineage>
</organism>
<feature type="signal peptide" evidence="2">
    <location>
        <begin position="1"/>
        <end position="22"/>
    </location>
</feature>
<feature type="chain" id="PRO_0000278124" description="Integrin beta-2-like protein">
    <location>
        <begin position="23"/>
        <end position="738"/>
    </location>
</feature>
<feature type="topological domain" description="Extracellular" evidence="2">
    <location>
        <begin position="23"/>
        <end position="671"/>
    </location>
</feature>
<feature type="transmembrane region" description="Helical" evidence="2">
    <location>
        <begin position="672"/>
        <end position="692"/>
    </location>
</feature>
<feature type="topological domain" description="Cytoplasmic" evidence="2">
    <location>
        <begin position="693"/>
        <end position="738"/>
    </location>
</feature>
<feature type="domain" description="PSI" evidence="2">
    <location>
        <begin position="24"/>
        <end position="74"/>
    </location>
</feature>
<feature type="domain" description="VWFA" evidence="2">
    <location>
        <begin position="126"/>
        <end position="329"/>
    </location>
</feature>
<feature type="domain" description="I-EGF 1" evidence="3">
    <location>
        <begin position="421"/>
        <end position="454"/>
    </location>
</feature>
<feature type="domain" description="I-EGF 2" evidence="3">
    <location>
        <begin position="455"/>
        <end position="507"/>
    </location>
</feature>
<feature type="domain" description="I-EGF 3" evidence="3">
    <location>
        <begin position="508"/>
        <end position="546"/>
    </location>
</feature>
<feature type="domain" description="I-EGF 4" evidence="3">
    <location>
        <begin position="547"/>
        <end position="585"/>
    </location>
</feature>
<feature type="region of interest" description="Disordered" evidence="4">
    <location>
        <begin position="709"/>
        <end position="738"/>
    </location>
</feature>
<feature type="compositionally biased region" description="Polar residues" evidence="4">
    <location>
        <begin position="710"/>
        <end position="719"/>
    </location>
</feature>
<feature type="glycosylation site" description="N-linked (GlcNAc...) asparagine" evidence="2">
    <location>
        <position position="29"/>
    </location>
</feature>
<feature type="glycosylation site" description="N-linked (GlcNAc...) asparagine" evidence="2">
    <location>
        <position position="50"/>
    </location>
</feature>
<feature type="glycosylation site" description="N-linked (GlcNAc...) asparagine" evidence="2">
    <location>
        <position position="102"/>
    </location>
</feature>
<feature type="glycosylation site" description="N-linked (GlcNAc...) asparagine" evidence="2">
    <location>
        <position position="173"/>
    </location>
</feature>
<feature type="glycosylation site" description="N-linked (GlcNAc...) asparagine" evidence="2">
    <location>
        <position position="226"/>
    </location>
</feature>
<feature type="glycosylation site" description="N-linked (GlcNAc...) asparagine" evidence="2">
    <location>
        <position position="252"/>
    </location>
</feature>
<feature type="glycosylation site" description="N-linked (GlcNAc...) asparagine" evidence="2">
    <location>
        <position position="342"/>
    </location>
</feature>
<feature type="glycosylation site" description="N-linked (GlcNAc...) asparagine" evidence="2">
    <location>
        <position position="360"/>
    </location>
</feature>
<feature type="glycosylation site" description="N-linked (GlcNAc...) asparagine" evidence="2">
    <location>
        <position position="386"/>
    </location>
</feature>
<feature type="glycosylation site" description="N-linked (GlcNAc...) asparagine" evidence="2">
    <location>
        <position position="473"/>
    </location>
</feature>
<feature type="glycosylation site" description="N-linked (GlcNAc...) asparagine" evidence="2">
    <location>
        <position position="627"/>
    </location>
</feature>
<feature type="glycosylation site" description="N-linked (GlcNAc...) asparagine" evidence="2">
    <location>
        <position position="669"/>
    </location>
</feature>
<feature type="disulfide bond" evidence="1">
    <location>
        <begin position="25"/>
        <end position="419"/>
    </location>
</feature>
<feature type="disulfide bond" evidence="1">
    <location>
        <begin position="33"/>
        <end position="43"/>
    </location>
</feature>
<feature type="disulfide bond" evidence="1">
    <location>
        <begin position="36"/>
        <end position="73"/>
    </location>
</feature>
<feature type="disulfide bond" evidence="1">
    <location>
        <begin position="46"/>
        <end position="62"/>
    </location>
</feature>
<feature type="disulfide bond" evidence="1">
    <location>
        <begin position="218"/>
        <end position="258"/>
    </location>
</feature>
<feature type="disulfide bond" evidence="1">
    <location>
        <begin position="358"/>
        <end position="372"/>
    </location>
</feature>
<feature type="disulfide bond" evidence="3">
    <location>
        <begin position="421"/>
        <end position="439"/>
    </location>
</feature>
<feature type="disulfide bond" evidence="3">
    <location>
        <begin position="431"/>
        <end position="442"/>
    </location>
</feature>
<feature type="disulfide bond" evidence="3">
    <location>
        <begin position="444"/>
        <end position="453"/>
    </location>
</feature>
<feature type="disulfide bond" evidence="3">
    <location>
        <begin position="455"/>
        <end position="486"/>
    </location>
</feature>
<feature type="disulfide bond" evidence="3">
    <location>
        <begin position="469"/>
        <end position="484"/>
    </location>
</feature>
<feature type="disulfide bond" evidence="3">
    <location>
        <begin position="478"/>
        <end position="489"/>
    </location>
</feature>
<feature type="disulfide bond" evidence="3">
    <location>
        <begin position="491"/>
        <end position="506"/>
    </location>
</feature>
<feature type="disulfide bond" evidence="3">
    <location>
        <begin position="508"/>
        <end position="531"/>
    </location>
</feature>
<feature type="disulfide bond" evidence="3">
    <location>
        <begin position="513"/>
        <end position="529"/>
    </location>
</feature>
<feature type="disulfide bond" evidence="3">
    <location>
        <begin position="521"/>
        <end position="534"/>
    </location>
</feature>
<feature type="disulfide bond" evidence="3">
    <location>
        <begin position="536"/>
        <end position="545"/>
    </location>
</feature>
<feature type="disulfide bond" evidence="3">
    <location>
        <begin position="547"/>
        <end position="570"/>
    </location>
</feature>
<feature type="disulfide bond" evidence="3">
    <location>
        <begin position="554"/>
        <end position="568"/>
    </location>
</feature>
<feature type="disulfide bond" evidence="3">
    <location>
        <begin position="562"/>
        <end position="573"/>
    </location>
</feature>
<feature type="disulfide bond" evidence="3">
    <location>
        <begin position="575"/>
        <end position="584"/>
    </location>
</feature>
<feature type="disulfide bond" evidence="1">
    <location>
        <begin position="594"/>
        <end position="603"/>
    </location>
</feature>
<feature type="disulfide bond" evidence="1">
    <location>
        <begin position="600"/>
        <end position="664"/>
    </location>
</feature>
<feature type="splice variant" id="VSP_052319" description="In isoform 3." evidence="11">
    <original>GGKGAMECGICRCNSGYAGKNCECQTQGPSSQDLEGSCRKDNSSIMCSGLGDCICGQCE</original>
    <variation>LQEDESWQPRLFSRKRPLLLWPMLLSLQLRGLSLPVPDVHFRLSEQQDGGVQWPWSMLL</variation>
    <location>
        <begin position="432"/>
        <end position="490"/>
    </location>
</feature>
<feature type="splice variant" id="VSP_052320" description="In isoform 3." evidence="11">
    <location>
        <begin position="491"/>
        <end position="738"/>
    </location>
</feature>
<feature type="splice variant" id="VSP_052321" description="In isoform 2." evidence="12">
    <original>ERGHCSCGRCFCRYGF</original>
    <variation>ASWAQPASAGCPLQAV</variation>
    <location>
        <begin position="525"/>
        <end position="540"/>
    </location>
</feature>
<feature type="splice variant" id="VSP_052322" description="In isoform 2." evidence="12">
    <location>
        <begin position="541"/>
        <end position="738"/>
    </location>
</feature>
<feature type="sequence variant" description="In strain: BALB/c and C3H/HeJ." evidence="6">
    <original>G</original>
    <variation>S</variation>
    <location>
        <position position="539"/>
    </location>
</feature>
<feature type="sequence conflict" description="In Ref. 1; AAC25502 and 4; AAI13143." evidence="13" ref="1 4">
    <original>N</original>
    <variation>D</variation>
    <location>
        <position position="509"/>
    </location>
</feature>
<feature type="sequence conflict" description="In Ref. 1; AAC25502." evidence="13" ref="1">
    <original>A</original>
    <variation>V</variation>
    <location>
        <position position="710"/>
    </location>
</feature>
<feature type="strand" evidence="18">
    <location>
        <begin position="127"/>
        <end position="134"/>
    </location>
</feature>
<feature type="helix" evidence="18">
    <location>
        <begin position="137"/>
        <end position="139"/>
    </location>
</feature>
<feature type="turn" evidence="18">
    <location>
        <begin position="140"/>
        <end position="142"/>
    </location>
</feature>
<feature type="helix" evidence="18">
    <location>
        <begin position="143"/>
        <end position="160"/>
    </location>
</feature>
<feature type="strand" evidence="18">
    <location>
        <begin position="164"/>
        <end position="174"/>
    </location>
</feature>
<feature type="strand" evidence="18">
    <location>
        <begin position="176"/>
        <end position="184"/>
    </location>
</feature>
<feature type="helix" evidence="18">
    <location>
        <begin position="186"/>
        <end position="194"/>
    </location>
</feature>
<feature type="strand" evidence="18">
    <location>
        <begin position="202"/>
        <end position="206"/>
    </location>
</feature>
<feature type="helix" evidence="18">
    <location>
        <begin position="208"/>
        <end position="217"/>
    </location>
</feature>
<feature type="helix" evidence="18">
    <location>
        <begin position="219"/>
        <end position="222"/>
    </location>
</feature>
<feature type="strand" evidence="18">
    <location>
        <begin position="226"/>
        <end position="234"/>
    </location>
</feature>
<feature type="helix" evidence="18">
    <location>
        <begin position="244"/>
        <end position="248"/>
    </location>
</feature>
<feature type="strand" evidence="18">
    <location>
        <begin position="260"/>
        <end position="265"/>
    </location>
</feature>
<feature type="helix" evidence="18">
    <location>
        <begin position="266"/>
        <end position="269"/>
    </location>
</feature>
<feature type="helix" evidence="18">
    <location>
        <begin position="276"/>
        <end position="286"/>
    </location>
</feature>
<feature type="strand" evidence="18">
    <location>
        <begin position="289"/>
        <end position="295"/>
    </location>
</feature>
<feature type="helix" evidence="18">
    <location>
        <begin position="296"/>
        <end position="308"/>
    </location>
</feature>
<feature type="strand" evidence="18">
    <location>
        <begin position="313"/>
        <end position="319"/>
    </location>
</feature>
<feature type="helix" evidence="18">
    <location>
        <begin position="322"/>
        <end position="333"/>
    </location>
</feature>
<sequence length="738" mass="81547">MLGQCTLLPVLAGLLSLESALSQLCTKDNVSTCQDCIRSGPSCAWCQKLNFTGRGEPDSVRCDTPEQLLLKGCTSEYLVDPKSLAESQEDKERDQRQLSPRNVTVFLRPGQAATFKVDFQRTQDNSVDLYFLMGLSGSAQGHLSNVQTLGSDLLKALNEISRSGRIGFGSIVNMTFQHILKLTADSSQFQRELRKQLVSGKLATPKGQLDAVVQVAICLGEIGWRNGTRFLVLVTDNDFHLAKDKTLGTRQNTSDGRCHLDDGMYRSRGEPDYQSVVQLASKLAENNIQPIFVVPSRMVKTYEKLTTFIPKLTIGELSDDSSNVAQLIRNAYSKLSSIVVLNHSTIPSILKVTYDSYCSNGTSNPGKPSGDCSGVQINDQVTFQVNITASECFREQFFFIQALGFMDSVTVRVLPLCECQCQEQSQHHSLCGGKGAMECGICRCNSGYAGKNCECQTQGPSSQDLEGSCRKDNSSIMCSGLGDCICGQCECHTSDIPNKEIYGQYCECNNVNCERYDGQVCGGPERGHCSCGRCFCRYGFVGSACQCRMSTSGCLNNRMVECSGHGRCYCNRCLCDPGYQPPLCEKRPGYFHRCSEYYSCARCLKDNSAIKCRECWNLLFSNTPFSNKTCMTERDSEGCWTTYTLYQPDQSDINSIYIKESLVCAEISNTTILLGVIVGVLLAVIFLLVYCMVYLKGTQKAAKLPRKGGAQSTLAQQPHFQEPHHVEPVWNQERQGTQ</sequence>
<reference evidence="13 14" key="1">
    <citation type="journal article" date="1998" name="J. Biol. Chem.">
        <title>Identification of pactolus, an integrin beta subunit-like cell-surface protein preferentially expressed by cells of the bone marrow.</title>
        <authorList>
            <person name="Chen Y."/>
            <person name="Garrison S."/>
            <person name="Weis J.J."/>
            <person name="Weis J.H."/>
        </authorList>
    </citation>
    <scope>NUCLEOTIDE SEQUENCE [MRNA] (ISOFORMS 1 AND 2)</scope>
    <scope>SUBCELLULAR LOCATION</scope>
    <source>
        <strain evidence="14">Swiss Webster / NIH</strain>
        <tissue evidence="14">Bone marrow</tissue>
    </source>
</reference>
<reference evidence="13" key="2">
    <citation type="journal article" date="1999" name="Mamm. Genome">
        <title>Genomic organization, chromosomal localization, and transcriptional variants of the murine Pactolus gene.</title>
        <authorList>
            <person name="Margraf R.L."/>
            <person name="Chen Y."/>
            <person name="Garrison S."/>
            <person name="Weis J.J."/>
            <person name="Weis J.H."/>
        </authorList>
    </citation>
    <scope>NUCLEOTIDE SEQUENCE [MRNA] (ISOFORM 3)</scope>
    <source>
        <strain evidence="5">129/Sv</strain>
    </source>
</reference>
<reference evidence="13 16" key="3">
    <citation type="journal article" date="2005" name="Science">
        <title>The transcriptional landscape of the mammalian genome.</title>
        <authorList>
            <person name="Carninci P."/>
            <person name="Kasukawa T."/>
            <person name="Katayama S."/>
            <person name="Gough J."/>
            <person name="Frith M.C."/>
            <person name="Maeda N."/>
            <person name="Oyama R."/>
            <person name="Ravasi T."/>
            <person name="Lenhard B."/>
            <person name="Wells C."/>
            <person name="Kodzius R."/>
            <person name="Shimokawa K."/>
            <person name="Bajic V.B."/>
            <person name="Brenner S.E."/>
            <person name="Batalov S."/>
            <person name="Forrest A.R."/>
            <person name="Zavolan M."/>
            <person name="Davis M.J."/>
            <person name="Wilming L.G."/>
            <person name="Aidinis V."/>
            <person name="Allen J.E."/>
            <person name="Ambesi-Impiombato A."/>
            <person name="Apweiler R."/>
            <person name="Aturaliya R.N."/>
            <person name="Bailey T.L."/>
            <person name="Bansal M."/>
            <person name="Baxter L."/>
            <person name="Beisel K.W."/>
            <person name="Bersano T."/>
            <person name="Bono H."/>
            <person name="Chalk A.M."/>
            <person name="Chiu K.P."/>
            <person name="Choudhary V."/>
            <person name="Christoffels A."/>
            <person name="Clutterbuck D.R."/>
            <person name="Crowe M.L."/>
            <person name="Dalla E."/>
            <person name="Dalrymple B.P."/>
            <person name="de Bono B."/>
            <person name="Della Gatta G."/>
            <person name="di Bernardo D."/>
            <person name="Down T."/>
            <person name="Engstrom P."/>
            <person name="Fagiolini M."/>
            <person name="Faulkner G."/>
            <person name="Fletcher C.F."/>
            <person name="Fukushima T."/>
            <person name="Furuno M."/>
            <person name="Futaki S."/>
            <person name="Gariboldi M."/>
            <person name="Georgii-Hemming P."/>
            <person name="Gingeras T.R."/>
            <person name="Gojobori T."/>
            <person name="Green R.E."/>
            <person name="Gustincich S."/>
            <person name="Harbers M."/>
            <person name="Hayashi Y."/>
            <person name="Hensch T.K."/>
            <person name="Hirokawa N."/>
            <person name="Hill D."/>
            <person name="Huminiecki L."/>
            <person name="Iacono M."/>
            <person name="Ikeo K."/>
            <person name="Iwama A."/>
            <person name="Ishikawa T."/>
            <person name="Jakt M."/>
            <person name="Kanapin A."/>
            <person name="Katoh M."/>
            <person name="Kawasawa Y."/>
            <person name="Kelso J."/>
            <person name="Kitamura H."/>
            <person name="Kitano H."/>
            <person name="Kollias G."/>
            <person name="Krishnan S.P."/>
            <person name="Kruger A."/>
            <person name="Kummerfeld S.K."/>
            <person name="Kurochkin I.V."/>
            <person name="Lareau L.F."/>
            <person name="Lazarevic D."/>
            <person name="Lipovich L."/>
            <person name="Liu J."/>
            <person name="Liuni S."/>
            <person name="McWilliam S."/>
            <person name="Madan Babu M."/>
            <person name="Madera M."/>
            <person name="Marchionni L."/>
            <person name="Matsuda H."/>
            <person name="Matsuzawa S."/>
            <person name="Miki H."/>
            <person name="Mignone F."/>
            <person name="Miyake S."/>
            <person name="Morris K."/>
            <person name="Mottagui-Tabar S."/>
            <person name="Mulder N."/>
            <person name="Nakano N."/>
            <person name="Nakauchi H."/>
            <person name="Ng P."/>
            <person name="Nilsson R."/>
            <person name="Nishiguchi S."/>
            <person name="Nishikawa S."/>
            <person name="Nori F."/>
            <person name="Ohara O."/>
            <person name="Okazaki Y."/>
            <person name="Orlando V."/>
            <person name="Pang K.C."/>
            <person name="Pavan W.J."/>
            <person name="Pavesi G."/>
            <person name="Pesole G."/>
            <person name="Petrovsky N."/>
            <person name="Piazza S."/>
            <person name="Reed J."/>
            <person name="Reid J.F."/>
            <person name="Ring B.Z."/>
            <person name="Ringwald M."/>
            <person name="Rost B."/>
            <person name="Ruan Y."/>
            <person name="Salzberg S.L."/>
            <person name="Sandelin A."/>
            <person name="Schneider C."/>
            <person name="Schoenbach C."/>
            <person name="Sekiguchi K."/>
            <person name="Semple C.A."/>
            <person name="Seno S."/>
            <person name="Sessa L."/>
            <person name="Sheng Y."/>
            <person name="Shibata Y."/>
            <person name="Shimada H."/>
            <person name="Shimada K."/>
            <person name="Silva D."/>
            <person name="Sinclair B."/>
            <person name="Sperling S."/>
            <person name="Stupka E."/>
            <person name="Sugiura K."/>
            <person name="Sultana R."/>
            <person name="Takenaka Y."/>
            <person name="Taki K."/>
            <person name="Tammoja K."/>
            <person name="Tan S.L."/>
            <person name="Tang S."/>
            <person name="Taylor M.S."/>
            <person name="Tegner J."/>
            <person name="Teichmann S.A."/>
            <person name="Ueda H.R."/>
            <person name="van Nimwegen E."/>
            <person name="Verardo R."/>
            <person name="Wei C.L."/>
            <person name="Yagi K."/>
            <person name="Yamanishi H."/>
            <person name="Zabarovsky E."/>
            <person name="Zhu S."/>
            <person name="Zimmer A."/>
            <person name="Hide W."/>
            <person name="Bult C."/>
            <person name="Grimmond S.M."/>
            <person name="Teasdale R.D."/>
            <person name="Liu E.T."/>
            <person name="Brusic V."/>
            <person name="Quackenbush J."/>
            <person name="Wahlestedt C."/>
            <person name="Mattick J.S."/>
            <person name="Hume D.A."/>
            <person name="Kai C."/>
            <person name="Sasaki D."/>
            <person name="Tomaru Y."/>
            <person name="Fukuda S."/>
            <person name="Kanamori-Katayama M."/>
            <person name="Suzuki M."/>
            <person name="Aoki J."/>
            <person name="Arakawa T."/>
            <person name="Iida J."/>
            <person name="Imamura K."/>
            <person name="Itoh M."/>
            <person name="Kato T."/>
            <person name="Kawaji H."/>
            <person name="Kawagashira N."/>
            <person name="Kawashima T."/>
            <person name="Kojima M."/>
            <person name="Kondo S."/>
            <person name="Konno H."/>
            <person name="Nakano K."/>
            <person name="Ninomiya N."/>
            <person name="Nishio T."/>
            <person name="Okada M."/>
            <person name="Plessy C."/>
            <person name="Shibata K."/>
            <person name="Shiraki T."/>
            <person name="Suzuki S."/>
            <person name="Tagami M."/>
            <person name="Waki K."/>
            <person name="Watahiki A."/>
            <person name="Okamura-Oho Y."/>
            <person name="Suzuki H."/>
            <person name="Kawai J."/>
            <person name="Hayashizaki Y."/>
        </authorList>
    </citation>
    <scope>NUCLEOTIDE SEQUENCE [LARGE SCALE MRNA] (ISOFORM 1)</scope>
    <source>
        <strain evidence="16">C57BL/6J</strain>
        <tissue evidence="16">Bone</tissue>
    </source>
</reference>
<reference evidence="13 15" key="4">
    <citation type="journal article" date="2004" name="Genome Res.">
        <title>The status, quality, and expansion of the NIH full-length cDNA project: the Mammalian Gene Collection (MGC).</title>
        <authorList>
            <consortium name="The MGC Project Team"/>
        </authorList>
    </citation>
    <scope>NUCLEOTIDE SEQUENCE [LARGE SCALE MRNA] (ISOFORM 1)</scope>
</reference>
<reference evidence="13" key="5">
    <citation type="journal article" date="2001" name="J. Biol. Chem.">
        <title>Functional characterization of pactolus, a beta-integrin-like protein preferentially expressed by neutrophils.</title>
        <authorList>
            <person name="Garrison S."/>
            <person name="Hojgaard A."/>
            <person name="Patillo D."/>
            <person name="Weis J.J."/>
            <person name="Weis J.H."/>
        </authorList>
    </citation>
    <scope>SUBUNIT</scope>
    <scope>SUBCELLULAR LOCATION</scope>
    <scope>TISSUE SPECIFICITY</scope>
    <scope>GLYCOSYLATION</scope>
    <scope>POLYMORPHISM</scope>
    <scope>VARIANT SER-539</scope>
</reference>
<reference evidence="13" key="6">
    <citation type="journal article" date="2003" name="J. Immunol.">
        <title>Surface translocation of pactolus is induced by cell activation and death, but is not required for neutrophil migration and function.</title>
        <authorList>
            <person name="Garrison S."/>
            <person name="Hojgaard A."/>
            <person name="Margraf R."/>
            <person name="Weis J.J."/>
            <person name="Weis J.H."/>
        </authorList>
    </citation>
    <scope>SUBCELLULAR LOCATION</scope>
    <scope>DISRUPTION PHENOTYPE</scope>
</reference>
<reference evidence="13" key="7">
    <citation type="journal article" date="2006" name="Immunology">
        <title>Altered localization of CXCL13 expressing cells in mice deficient in pactolus following an inflammatory stimulus.</title>
        <authorList>
            <person name="Hojgaard A."/>
            <person name="Close R."/>
            <person name="Dunn D.M."/>
            <person name="Weiss R.B."/>
            <person name="Weis J.J."/>
            <person name="Weis J.H."/>
        </authorList>
    </citation>
    <scope>FUNCTION</scope>
    <scope>DISRUPTION PHENOTYPE</scope>
</reference>
<reference key="8">
    <citation type="journal article" date="2007" name="Proteins">
        <title>Pactolus I-domain: functional switching of the Rossmann fold.</title>
        <authorList>
            <person name="Sen M."/>
            <person name="Legge G.B."/>
        </authorList>
    </citation>
    <scope>STRUCTURE BY NMR OF 124-335</scope>
    <scope>SUBUNIT</scope>
</reference>
<accession>Q3UV74</accession>
<accession>O88424</accession>
<accession>Q2KHL5</accession>
<gene>
    <name evidence="17" type="primary">Itgb2l</name>
</gene>